<evidence type="ECO:0000250" key="1">
    <source>
        <dbReference type="UniProtKB" id="A0A075FAK4"/>
    </source>
</evidence>
<evidence type="ECO:0000250" key="2">
    <source>
        <dbReference type="UniProtKB" id="C7BKP9"/>
    </source>
</evidence>
<evidence type="ECO:0000250" key="3">
    <source>
        <dbReference type="UniProtKB" id="Q38802"/>
    </source>
</evidence>
<evidence type="ECO:0000255" key="4"/>
<evidence type="ECO:0000269" key="5">
    <source>
    </source>
</evidence>
<evidence type="ECO:0000303" key="6">
    <source>
    </source>
</evidence>
<evidence type="ECO:0000305" key="7"/>
<evidence type="ECO:0000305" key="8">
    <source>
    </source>
</evidence>
<name>CPS3_MARVU</name>
<gene>
    <name evidence="6" type="primary">CPS3</name>
</gene>
<protein>
    <recommendedName>
        <fullName evidence="6">(+)-copalyl diphosphate synthase 3, chloroplastic</fullName>
        <shortName evidence="6">MvCPS3</shortName>
        <ecNumber evidence="5">5.5.1.12</ecNumber>
    </recommendedName>
</protein>
<comment type="function">
    <text evidence="5 8">Involved in the biosynthesis of labdane-type diterpenoid including marrubiin and other labdane-related furanoid diterpenoids with potential applications as anti-diabetics, analgesics or vasorelaxants (Probable). Terpene synthase that produces (+)-copalyl diphosphate ((+)-CPP) from geranylgeranyl diphosphate (GGPP) (PubMed:24990389).</text>
</comment>
<comment type="catalytic activity">
    <reaction evidence="5">
        <text>(2E,6E,10E)-geranylgeranyl diphosphate = (+)-copalyl diphosphate</text>
        <dbReference type="Rhea" id="RHEA:24316"/>
        <dbReference type="ChEBI" id="CHEBI:58635"/>
        <dbReference type="ChEBI" id="CHEBI:58756"/>
        <dbReference type="EC" id="5.5.1.12"/>
    </reaction>
    <physiologicalReaction direction="left-to-right" evidence="5">
        <dbReference type="Rhea" id="RHEA:24317"/>
    </physiologicalReaction>
</comment>
<comment type="cofactor">
    <cofactor evidence="3">
        <name>Mg(2+)</name>
        <dbReference type="ChEBI" id="CHEBI:18420"/>
    </cofactor>
</comment>
<comment type="pathway">
    <text evidence="8">Secondary metabolite biosynthesis; terpenoid biosynthesis.</text>
</comment>
<comment type="subcellular location">
    <subcellularLocation>
        <location evidence="4">Plastid</location>
        <location evidence="4">Chloroplast</location>
    </subcellularLocation>
</comment>
<comment type="tissue specificity">
    <text evidence="5">Present in both leaves and flowers, with higher levels in leaves.</text>
</comment>
<comment type="domain">
    <text evidence="7">The Asp-Xaa-Asp-Asp (DXDD) motif is important for the catalytic activity, presumably through binding to Mg(2+).</text>
</comment>
<comment type="similarity">
    <text evidence="7">Belongs to the terpene synthase family.</text>
</comment>
<reference key="1">
    <citation type="journal article" date="2014" name="Plant J.">
        <title>Diterpene synthases of the biosynthetic system of medicinally active diterpenoids in Marrubium vulgare.</title>
        <authorList>
            <person name="Zerbe P."/>
            <person name="Chiang A."/>
            <person name="Dullat H."/>
            <person name="O'Neil-Johnson M."/>
            <person name="Starks C."/>
            <person name="Hamberger B."/>
            <person name="Bohlmann J."/>
        </authorList>
    </citation>
    <scope>NUCLEOTIDE SEQUENCE [MRNA]</scope>
    <scope>FUNCTION</scope>
    <scope>CATALYTIC ACTIVITY</scope>
    <scope>PATHWAY</scope>
    <scope>TISSUE SPECIFICITY</scope>
</reference>
<organism>
    <name type="scientific">Marrubium vulgare</name>
    <name type="common">White horehound</name>
    <dbReference type="NCBI Taxonomy" id="41230"/>
    <lineage>
        <taxon>Eukaryota</taxon>
        <taxon>Viridiplantae</taxon>
        <taxon>Streptophyta</taxon>
        <taxon>Embryophyta</taxon>
        <taxon>Tracheophyta</taxon>
        <taxon>Spermatophyta</taxon>
        <taxon>Magnoliopsida</taxon>
        <taxon>eudicotyledons</taxon>
        <taxon>Gunneridae</taxon>
        <taxon>Pentapetalae</taxon>
        <taxon>asterids</taxon>
        <taxon>lamiids</taxon>
        <taxon>Lamiales</taxon>
        <taxon>Lamiaceae</taxon>
        <taxon>Lamioideae</taxon>
        <taxon>Marrubieae</taxon>
        <taxon>Marrubium</taxon>
    </lineage>
</organism>
<proteinExistence type="evidence at protein level"/>
<dbReference type="EC" id="5.5.1.12" evidence="5"/>
<dbReference type="EMBL" id="KJ584452">
    <property type="protein sequence ID" value="AIE77092.1"/>
    <property type="molecule type" value="mRNA"/>
</dbReference>
<dbReference type="SMR" id="A0A075FA51"/>
<dbReference type="BRENDA" id="5.5.1.12">
    <property type="organism ID" value="15343"/>
</dbReference>
<dbReference type="UniPathway" id="UPA00213"/>
<dbReference type="GO" id="GO:0009507">
    <property type="term" value="C:chloroplast"/>
    <property type="evidence" value="ECO:0007669"/>
    <property type="project" value="UniProtKB-SubCell"/>
</dbReference>
<dbReference type="GO" id="GO:0050559">
    <property type="term" value="F:copalyl diphosphate synthase activity"/>
    <property type="evidence" value="ECO:0000314"/>
    <property type="project" value="UniProtKB"/>
</dbReference>
<dbReference type="GO" id="GO:0000287">
    <property type="term" value="F:magnesium ion binding"/>
    <property type="evidence" value="ECO:0007669"/>
    <property type="project" value="TreeGrafter"/>
</dbReference>
<dbReference type="GO" id="GO:0010333">
    <property type="term" value="F:terpene synthase activity"/>
    <property type="evidence" value="ECO:0007669"/>
    <property type="project" value="InterPro"/>
</dbReference>
<dbReference type="GO" id="GO:0009686">
    <property type="term" value="P:gibberellin biosynthetic process"/>
    <property type="evidence" value="ECO:0007669"/>
    <property type="project" value="TreeGrafter"/>
</dbReference>
<dbReference type="FunFam" id="1.50.10.130:FF:000002">
    <property type="entry name" value="Ent-copalyl diphosphate synthase, chloroplastic"/>
    <property type="match status" value="1"/>
</dbReference>
<dbReference type="Gene3D" id="1.50.10.160">
    <property type="match status" value="1"/>
</dbReference>
<dbReference type="Gene3D" id="1.10.600.10">
    <property type="entry name" value="Farnesyl Diphosphate Synthase"/>
    <property type="match status" value="1"/>
</dbReference>
<dbReference type="Gene3D" id="1.50.10.130">
    <property type="entry name" value="Terpene synthase, N-terminal domain"/>
    <property type="match status" value="1"/>
</dbReference>
<dbReference type="InterPro" id="IPR008949">
    <property type="entry name" value="Isoprenoid_synthase_dom_sf"/>
</dbReference>
<dbReference type="InterPro" id="IPR001906">
    <property type="entry name" value="Terpene_synth_N"/>
</dbReference>
<dbReference type="InterPro" id="IPR036965">
    <property type="entry name" value="Terpene_synth_N_sf"/>
</dbReference>
<dbReference type="InterPro" id="IPR050148">
    <property type="entry name" value="Terpene_synthase-like"/>
</dbReference>
<dbReference type="InterPro" id="IPR008930">
    <property type="entry name" value="Terpenoid_cyclase/PrenylTrfase"/>
</dbReference>
<dbReference type="PANTHER" id="PTHR31739:SF30">
    <property type="entry name" value="COPAL-8-OL DIPHOSPHATE HYDRATASE, CHLOROPLASTIC"/>
    <property type="match status" value="1"/>
</dbReference>
<dbReference type="PANTHER" id="PTHR31739">
    <property type="entry name" value="ENT-COPALYL DIPHOSPHATE SYNTHASE, CHLOROPLASTIC"/>
    <property type="match status" value="1"/>
</dbReference>
<dbReference type="Pfam" id="PF01397">
    <property type="entry name" value="Terpene_synth"/>
    <property type="match status" value="1"/>
</dbReference>
<dbReference type="SFLD" id="SFLDG01014">
    <property type="entry name" value="Terpene_Cyclase_Like_1_N-term"/>
    <property type="match status" value="1"/>
</dbReference>
<dbReference type="SFLD" id="SFLDG01605">
    <property type="entry name" value="Terpene_Cyclase_Like_1_N-term"/>
    <property type="match status" value="1"/>
</dbReference>
<dbReference type="SUPFAM" id="SSF48239">
    <property type="entry name" value="Terpenoid cyclases/Protein prenyltransferases"/>
    <property type="match status" value="2"/>
</dbReference>
<dbReference type="SUPFAM" id="SSF48576">
    <property type="entry name" value="Terpenoid synthases"/>
    <property type="match status" value="1"/>
</dbReference>
<feature type="transit peptide" description="Chloroplast" evidence="4">
    <location>
        <begin position="1"/>
        <end status="unknown"/>
    </location>
</feature>
<feature type="chain" id="PRO_0000449303" description="(+)-copalyl diphosphate synthase 3, chloroplastic">
    <location>
        <begin status="unknown"/>
        <end position="785"/>
    </location>
</feature>
<feature type="short sequence motif" description="DXDD motif" evidence="1">
    <location>
        <begin position="371"/>
        <end position="374"/>
    </location>
</feature>
<feature type="binding site" evidence="3">
    <location>
        <position position="238"/>
    </location>
    <ligand>
        <name>substrate</name>
    </ligand>
</feature>
<feature type="binding site" evidence="2">
    <location>
        <position position="371"/>
    </location>
    <ligand>
        <name>Mg(2+)</name>
        <dbReference type="ChEBI" id="CHEBI:18420"/>
    </ligand>
</feature>
<feature type="binding site" evidence="2">
    <location>
        <position position="373"/>
    </location>
    <ligand>
        <name>Mg(2+)</name>
        <dbReference type="ChEBI" id="CHEBI:18420"/>
    </ligand>
</feature>
<feature type="binding site" evidence="3">
    <location>
        <position position="457"/>
    </location>
    <ligand>
        <name>substrate</name>
    </ligand>
</feature>
<accession>A0A075FA51</accession>
<sequence length="785" mass="90197">MGSLSTLNLIKTCVTLASSEKLNQPSQCYTISTCMKSSNNPPFNYYQINGRKKMSTAIDSSVNAPPEQKYNSTALEHDTEIIEIEDHIECIRRLLRTAGDGRISVSPYDTAWIALIKDLDGHDSPQFPSSMEWVADNQLPDGSWGDEHFVCVYDRLVNTIACVVALRSWNVHAHKCEKGIKYIKENVHKLEDANEEHMTCGFEVVFPALLQRAQSMGIKGIPYNAPVIEEIYNSREKKLKRIPMEVVHKVATSLLFSLEGLENLEWEKLLKLQSPDGSFLTSPSSTAFAFIHTKDRKCFNFINNIVHTFKGGAPHTYPVDIFGRLWAVDRLQRLGISRFFESEIAEFLSHVHRFWSDEAGVFSGRESVFCDIDDTSMGLRLLRMHGYHVDPNVLKNFKQSDKFSCYGGQMMECSSPIYNLYRASQLQFPGEEILEEANKFAYKFLQEKLESNQILDKWLISNHLSDEIKVGLEMPWYATLPRVETSYYIHHYGGGDDVWIGKTLYRMPEISNDTYRELARLDFRRCQAQHQLEWIYMQRWYESCRMQEFGISRKEVLRAYFLASGTIFEVERAKERVAWARSQIISHMIKSFFNKETTSSDQKQALLTELLFGNISASETEKRELDGVVVATLRQFLEGFDIGTRHQVKAAWDVWLRKVEQGEAHGGADAELCTTTLNTCANQHLSSHPDYNTLSKLTNKICHKLSQIQHQKEMKGGIKAKCSINNKEVDIEMQWLVKLVLEKSGLNRKAKQAFLSIAKTYYYRAYYADQTMDAHIFKVLFEPVV</sequence>
<keyword id="KW-0150">Chloroplast</keyword>
<keyword id="KW-0413">Isomerase</keyword>
<keyword id="KW-0460">Magnesium</keyword>
<keyword id="KW-0479">Metal-binding</keyword>
<keyword id="KW-0934">Plastid</keyword>
<keyword id="KW-0809">Transit peptide</keyword>